<dbReference type="EC" id="7.1.1.-" evidence="1"/>
<dbReference type="EMBL" id="DQ886273">
    <property type="protein sequence ID" value="ABH88073.1"/>
    <property type="molecule type" value="Genomic_DNA"/>
</dbReference>
<dbReference type="EMBL" id="EU196765">
    <property type="protein sequence ID" value="ABW22795.1"/>
    <property type="molecule type" value="Genomic_DNA"/>
</dbReference>
<dbReference type="RefSeq" id="YP_001122793.1">
    <property type="nucleotide sequence ID" value="NC_009259.1"/>
</dbReference>
<dbReference type="SMR" id="A4GG92"/>
<dbReference type="GeneID" id="4961744"/>
<dbReference type="KEGG" id="pvu:4961744"/>
<dbReference type="GO" id="GO:0009535">
    <property type="term" value="C:chloroplast thylakoid membrane"/>
    <property type="evidence" value="ECO:0007669"/>
    <property type="project" value="UniProtKB-SubCell"/>
</dbReference>
<dbReference type="GO" id="GO:0030964">
    <property type="term" value="C:NADH dehydrogenase complex"/>
    <property type="evidence" value="ECO:0007669"/>
    <property type="project" value="TreeGrafter"/>
</dbReference>
<dbReference type="GO" id="GO:0008137">
    <property type="term" value="F:NADH dehydrogenase (ubiquinone) activity"/>
    <property type="evidence" value="ECO:0007669"/>
    <property type="project" value="InterPro"/>
</dbReference>
<dbReference type="GO" id="GO:0048038">
    <property type="term" value="F:quinone binding"/>
    <property type="evidence" value="ECO:0007669"/>
    <property type="project" value="UniProtKB-KW"/>
</dbReference>
<dbReference type="GO" id="GO:0019684">
    <property type="term" value="P:photosynthesis, light reaction"/>
    <property type="evidence" value="ECO:0007669"/>
    <property type="project" value="UniProtKB-UniRule"/>
</dbReference>
<dbReference type="FunFam" id="1.20.58.1610:FF:000001">
    <property type="entry name" value="NAD(P)H-quinone oxidoreductase subunit 3, chloroplastic"/>
    <property type="match status" value="1"/>
</dbReference>
<dbReference type="Gene3D" id="1.20.58.1610">
    <property type="entry name" value="NADH:ubiquinone/plastoquinone oxidoreductase, chain 3"/>
    <property type="match status" value="1"/>
</dbReference>
<dbReference type="HAMAP" id="MF_01394">
    <property type="entry name" value="NDH1_NuoA"/>
    <property type="match status" value="1"/>
</dbReference>
<dbReference type="InterPro" id="IPR023043">
    <property type="entry name" value="NAD(P)H_OxRDtase_bac/plastid"/>
</dbReference>
<dbReference type="InterPro" id="IPR000440">
    <property type="entry name" value="NADH_UbQ/plastoQ_OxRdtase_su3"/>
</dbReference>
<dbReference type="InterPro" id="IPR038430">
    <property type="entry name" value="NDAH_ubi_oxred_su3_sf"/>
</dbReference>
<dbReference type="PANTHER" id="PTHR11058">
    <property type="entry name" value="NADH-UBIQUINONE OXIDOREDUCTASE CHAIN 3"/>
    <property type="match status" value="1"/>
</dbReference>
<dbReference type="PANTHER" id="PTHR11058:SF9">
    <property type="entry name" value="NADH-UBIQUINONE OXIDOREDUCTASE CHAIN 3"/>
    <property type="match status" value="1"/>
</dbReference>
<dbReference type="Pfam" id="PF00507">
    <property type="entry name" value="Oxidored_q4"/>
    <property type="match status" value="1"/>
</dbReference>
<sequence length="120" mass="13826">MFLLYEYDIFWAFLIISSLIPILAFLISGILAPISKGPEKLSSYESGIEPIGDAWLQFRIRYYMFALIFVVFDVETVFLYPWAMSFDVLGVSVFLEAFLFVLILIVGSVYAWRKGALEWS</sequence>
<protein>
    <recommendedName>
        <fullName evidence="1">NAD(P)H-quinone oxidoreductase subunit 3, chloroplastic</fullName>
        <ecNumber evidence="1">7.1.1.-</ecNumber>
    </recommendedName>
    <alternativeName>
        <fullName evidence="1">NAD(P)H dehydrogenase subunit 3</fullName>
    </alternativeName>
    <alternativeName>
        <fullName evidence="1">NADH-plastoquinone oxidoreductase subunit 3</fullName>
    </alternativeName>
</protein>
<comment type="function">
    <text evidence="1">NDH shuttles electrons from NAD(P)H:plastoquinone, via FMN and iron-sulfur (Fe-S) centers, to quinones in the photosynthetic chain and possibly in a chloroplast respiratory chain. The immediate electron acceptor for the enzyme in this species is believed to be plastoquinone. Couples the redox reaction to proton translocation, and thus conserves the redox energy in a proton gradient.</text>
</comment>
<comment type="catalytic activity">
    <reaction evidence="1">
        <text>a plastoquinone + NADH + (n+1) H(+)(in) = a plastoquinol + NAD(+) + n H(+)(out)</text>
        <dbReference type="Rhea" id="RHEA:42608"/>
        <dbReference type="Rhea" id="RHEA-COMP:9561"/>
        <dbReference type="Rhea" id="RHEA-COMP:9562"/>
        <dbReference type="ChEBI" id="CHEBI:15378"/>
        <dbReference type="ChEBI" id="CHEBI:17757"/>
        <dbReference type="ChEBI" id="CHEBI:57540"/>
        <dbReference type="ChEBI" id="CHEBI:57945"/>
        <dbReference type="ChEBI" id="CHEBI:62192"/>
    </reaction>
</comment>
<comment type="catalytic activity">
    <reaction evidence="1">
        <text>a plastoquinone + NADPH + (n+1) H(+)(in) = a plastoquinol + NADP(+) + n H(+)(out)</text>
        <dbReference type="Rhea" id="RHEA:42612"/>
        <dbReference type="Rhea" id="RHEA-COMP:9561"/>
        <dbReference type="Rhea" id="RHEA-COMP:9562"/>
        <dbReference type="ChEBI" id="CHEBI:15378"/>
        <dbReference type="ChEBI" id="CHEBI:17757"/>
        <dbReference type="ChEBI" id="CHEBI:57783"/>
        <dbReference type="ChEBI" id="CHEBI:58349"/>
        <dbReference type="ChEBI" id="CHEBI:62192"/>
    </reaction>
</comment>
<comment type="subunit">
    <text evidence="1">NDH is composed of at least 16 different subunits, 5 of which are encoded in the nucleus.</text>
</comment>
<comment type="subcellular location">
    <subcellularLocation>
        <location evidence="1">Plastid</location>
        <location evidence="1">Chloroplast thylakoid membrane</location>
        <topology evidence="1">Multi-pass membrane protein</topology>
    </subcellularLocation>
</comment>
<comment type="similarity">
    <text evidence="1">Belongs to the complex I subunit 3 family.</text>
</comment>
<name>NU3C_PHAVU</name>
<feature type="chain" id="PRO_0000362864" description="NAD(P)H-quinone oxidoreductase subunit 3, chloroplastic">
    <location>
        <begin position="1"/>
        <end position="120"/>
    </location>
</feature>
<feature type="transmembrane region" description="Helical" evidence="1">
    <location>
        <begin position="9"/>
        <end position="29"/>
    </location>
</feature>
<feature type="transmembrane region" description="Helical" evidence="1">
    <location>
        <begin position="64"/>
        <end position="84"/>
    </location>
</feature>
<feature type="transmembrane region" description="Helical" evidence="1">
    <location>
        <begin position="88"/>
        <end position="108"/>
    </location>
</feature>
<keyword id="KW-0150">Chloroplast</keyword>
<keyword id="KW-0472">Membrane</keyword>
<keyword id="KW-0520">NAD</keyword>
<keyword id="KW-0521">NADP</keyword>
<keyword id="KW-0934">Plastid</keyword>
<keyword id="KW-0618">Plastoquinone</keyword>
<keyword id="KW-0874">Quinone</keyword>
<keyword id="KW-0793">Thylakoid</keyword>
<keyword id="KW-1278">Translocase</keyword>
<keyword id="KW-0812">Transmembrane</keyword>
<keyword id="KW-1133">Transmembrane helix</keyword>
<keyword id="KW-0813">Transport</keyword>
<geneLocation type="chloroplast"/>
<reference key="1">
    <citation type="journal article" date="2007" name="BMC Genomics">
        <title>Rapid evolutionary change of common bean (Phaseolus vulgaris L) plastome, and the genomic diversification of legume chloroplasts.</title>
        <authorList>
            <person name="Guo X."/>
            <person name="Castillo-Ramirez S."/>
            <person name="Gonzalez V."/>
            <person name="Bustos P."/>
            <person name="Fernandez-Vazquez J.L."/>
            <person name="Santamaria R.I."/>
            <person name="Arellano J."/>
            <person name="Cevallos M.A."/>
            <person name="Davila G."/>
        </authorList>
    </citation>
    <scope>NUCLEOTIDE SEQUENCE [LARGE SCALE GENOMIC DNA]</scope>
    <source>
        <strain>cv. Negro Jamapa</strain>
    </source>
</reference>
<reference key="2">
    <citation type="submission" date="2007-10" db="EMBL/GenBank/DDBJ databases">
        <title>Complete nucleotide sequence of the plastid genome of the common bean, Phaseolus vulgaris.</title>
        <authorList>
            <person name="Moore M.J."/>
            <person name="Triplett E.W."/>
            <person name="Broughton W.J."/>
            <person name="Soltis P.S."/>
            <person name="Soltis D.E."/>
        </authorList>
    </citation>
    <scope>NUCLEOTIDE SEQUENCE [LARGE SCALE GENOMIC DNA]</scope>
</reference>
<accession>A4GG92</accession>
<gene>
    <name evidence="1" type="primary">ndhC</name>
</gene>
<proteinExistence type="inferred from homology"/>
<organism>
    <name type="scientific">Phaseolus vulgaris</name>
    <name type="common">Kidney bean</name>
    <name type="synonym">French bean</name>
    <dbReference type="NCBI Taxonomy" id="3885"/>
    <lineage>
        <taxon>Eukaryota</taxon>
        <taxon>Viridiplantae</taxon>
        <taxon>Streptophyta</taxon>
        <taxon>Embryophyta</taxon>
        <taxon>Tracheophyta</taxon>
        <taxon>Spermatophyta</taxon>
        <taxon>Magnoliopsida</taxon>
        <taxon>eudicotyledons</taxon>
        <taxon>Gunneridae</taxon>
        <taxon>Pentapetalae</taxon>
        <taxon>rosids</taxon>
        <taxon>fabids</taxon>
        <taxon>Fabales</taxon>
        <taxon>Fabaceae</taxon>
        <taxon>Papilionoideae</taxon>
        <taxon>50 kb inversion clade</taxon>
        <taxon>NPAAA clade</taxon>
        <taxon>indigoferoid/millettioid clade</taxon>
        <taxon>Phaseoleae</taxon>
        <taxon>Phaseolus</taxon>
    </lineage>
</organism>
<evidence type="ECO:0000255" key="1">
    <source>
        <dbReference type="HAMAP-Rule" id="MF_01394"/>
    </source>
</evidence>